<feature type="chain" id="PRO_0000231470" description="Putative pterin-4-alpha-carbinolamine dehydratase 2">
    <location>
        <begin position="1"/>
        <end position="100"/>
    </location>
</feature>
<name>PHS2_CUPPJ</name>
<accession>Q46VT8</accession>
<sequence length="100" mass="11368">MTPLSPQARATLLAELPGWTDVDNRDAIQKRFTFPDFNAAFAFMTRVAIQAEKADHHPEWFNVYNRVDITLSTHDANGLTQRDIDLAHFIERAAASLRVE</sequence>
<comment type="catalytic activity">
    <reaction evidence="1">
        <text>(4aS,6R)-4a-hydroxy-L-erythro-5,6,7,8-tetrahydrobiopterin = (6R)-L-erythro-6,7-dihydrobiopterin + H2O</text>
        <dbReference type="Rhea" id="RHEA:11920"/>
        <dbReference type="ChEBI" id="CHEBI:15377"/>
        <dbReference type="ChEBI" id="CHEBI:15642"/>
        <dbReference type="ChEBI" id="CHEBI:43120"/>
        <dbReference type="EC" id="4.2.1.96"/>
    </reaction>
</comment>
<comment type="similarity">
    <text evidence="1">Belongs to the pterin-4-alpha-carbinolamine dehydratase family.</text>
</comment>
<comment type="sequence caution" evidence="2">
    <conflict type="erroneous initiation">
        <sequence resource="EMBL-CDS" id="AAZ62746"/>
    </conflict>
</comment>
<evidence type="ECO:0000255" key="1">
    <source>
        <dbReference type="HAMAP-Rule" id="MF_00434"/>
    </source>
</evidence>
<evidence type="ECO:0000305" key="2"/>
<reference key="1">
    <citation type="journal article" date="2010" name="PLoS ONE">
        <title>The complete multipartite genome sequence of Cupriavidus necator JMP134, a versatile pollutant degrader.</title>
        <authorList>
            <person name="Lykidis A."/>
            <person name="Perez-Pantoja D."/>
            <person name="Ledger T."/>
            <person name="Mavromatis K."/>
            <person name="Anderson I.J."/>
            <person name="Ivanova N.N."/>
            <person name="Hooper S.D."/>
            <person name="Lapidus A."/>
            <person name="Lucas S."/>
            <person name="Gonzalez B."/>
            <person name="Kyrpides N.C."/>
        </authorList>
    </citation>
    <scope>NUCLEOTIDE SEQUENCE [LARGE SCALE GENOMIC DNA]</scope>
    <source>
        <strain>JMP134 / LMG 1197</strain>
    </source>
</reference>
<protein>
    <recommendedName>
        <fullName evidence="1">Putative pterin-4-alpha-carbinolamine dehydratase 2</fullName>
        <shortName evidence="1">PHS 2</shortName>
        <ecNumber evidence="1">4.2.1.96</ecNumber>
    </recommendedName>
    <alternativeName>
        <fullName evidence="1">4-alpha-hydroxy-tetrahydropterin dehydratase 2</fullName>
    </alternativeName>
    <alternativeName>
        <fullName evidence="1">Pterin carbinolamine dehydratase 2</fullName>
        <shortName evidence="1">PCD 2</shortName>
    </alternativeName>
</protein>
<keyword id="KW-0456">Lyase</keyword>
<organism>
    <name type="scientific">Cupriavidus pinatubonensis (strain JMP 134 / LMG 1197)</name>
    <name type="common">Cupriavidus necator (strain JMP 134)</name>
    <dbReference type="NCBI Taxonomy" id="264198"/>
    <lineage>
        <taxon>Bacteria</taxon>
        <taxon>Pseudomonadati</taxon>
        <taxon>Pseudomonadota</taxon>
        <taxon>Betaproteobacteria</taxon>
        <taxon>Burkholderiales</taxon>
        <taxon>Burkholderiaceae</taxon>
        <taxon>Cupriavidus</taxon>
    </lineage>
</organism>
<proteinExistence type="inferred from homology"/>
<dbReference type="EC" id="4.2.1.96" evidence="1"/>
<dbReference type="EMBL" id="CP000090">
    <property type="protein sequence ID" value="AAZ62746.1"/>
    <property type="status" value="ALT_INIT"/>
    <property type="molecule type" value="Genomic_DNA"/>
</dbReference>
<dbReference type="SMR" id="Q46VT8"/>
<dbReference type="STRING" id="264198.Reut_A3388"/>
<dbReference type="KEGG" id="reu:Reut_A3388"/>
<dbReference type="eggNOG" id="COG2154">
    <property type="taxonomic scope" value="Bacteria"/>
</dbReference>
<dbReference type="HOGENOM" id="CLU_081974_3_2_4"/>
<dbReference type="OrthoDB" id="9794987at2"/>
<dbReference type="GO" id="GO:0008124">
    <property type="term" value="F:4-alpha-hydroxytetrahydrobiopterin dehydratase activity"/>
    <property type="evidence" value="ECO:0007669"/>
    <property type="project" value="UniProtKB-UniRule"/>
</dbReference>
<dbReference type="GO" id="GO:0006729">
    <property type="term" value="P:tetrahydrobiopterin biosynthetic process"/>
    <property type="evidence" value="ECO:0007669"/>
    <property type="project" value="InterPro"/>
</dbReference>
<dbReference type="CDD" id="cd00914">
    <property type="entry name" value="PCD_DCoH_subfamily_b"/>
    <property type="match status" value="1"/>
</dbReference>
<dbReference type="Gene3D" id="3.30.1360.20">
    <property type="entry name" value="Transcriptional coactivator/pterin dehydratase"/>
    <property type="match status" value="1"/>
</dbReference>
<dbReference type="HAMAP" id="MF_00434">
    <property type="entry name" value="Pterin_4_alpha"/>
    <property type="match status" value="1"/>
</dbReference>
<dbReference type="InterPro" id="IPR036428">
    <property type="entry name" value="PCD_sf"/>
</dbReference>
<dbReference type="InterPro" id="IPR001533">
    <property type="entry name" value="Pterin_deHydtase"/>
</dbReference>
<dbReference type="NCBIfam" id="NF002018">
    <property type="entry name" value="PRK00823.1-3"/>
    <property type="match status" value="1"/>
</dbReference>
<dbReference type="NCBIfam" id="NF002020">
    <property type="entry name" value="PRK00823.1-5"/>
    <property type="match status" value="1"/>
</dbReference>
<dbReference type="PANTHER" id="PTHR12599">
    <property type="entry name" value="PTERIN-4-ALPHA-CARBINOLAMINE DEHYDRATASE"/>
    <property type="match status" value="1"/>
</dbReference>
<dbReference type="PANTHER" id="PTHR12599:SF0">
    <property type="entry name" value="PTERIN-4-ALPHA-CARBINOLAMINE DEHYDRATASE"/>
    <property type="match status" value="1"/>
</dbReference>
<dbReference type="Pfam" id="PF01329">
    <property type="entry name" value="Pterin_4a"/>
    <property type="match status" value="1"/>
</dbReference>
<dbReference type="SUPFAM" id="SSF55248">
    <property type="entry name" value="PCD-like"/>
    <property type="match status" value="1"/>
</dbReference>
<gene>
    <name type="ordered locus">Reut_A3388</name>
</gene>